<keyword id="KW-0378">Hydrolase</keyword>
<keyword id="KW-0442">Lipid degradation</keyword>
<keyword id="KW-0443">Lipid metabolism</keyword>
<keyword id="KW-0496">Mitochondrion</keyword>
<keyword id="KW-1185">Reference proteome</keyword>
<name>TGL2_YEAST</name>
<comment type="function">
    <text evidence="1 3 4">Mitochondrial triacylglycerol (TAG) lipase with activity toward long-chain diacylglycerols (DAGs) and triacylglycerols (TAGs) (PubMed:19959834, PubMed:9544243). Involved in mitochondrial lipid metabolism (PubMed:31483742).</text>
</comment>
<comment type="catalytic activity">
    <reaction evidence="4">
        <text>a triacylglycerol + H2O = a diacylglycerol + a fatty acid + H(+)</text>
        <dbReference type="Rhea" id="RHEA:12044"/>
        <dbReference type="ChEBI" id="CHEBI:15377"/>
        <dbReference type="ChEBI" id="CHEBI:15378"/>
        <dbReference type="ChEBI" id="CHEBI:17855"/>
        <dbReference type="ChEBI" id="CHEBI:18035"/>
        <dbReference type="ChEBI" id="CHEBI:28868"/>
        <dbReference type="EC" id="3.1.1.3"/>
    </reaction>
</comment>
<comment type="catalytic activity">
    <reaction evidence="1">
        <text>1,2,3-tri-(9Z-octadecenoyl)-glycerol + H2O = di-(9Z)-octadecenoylglycerol + (9Z)-octadecenoate + H(+)</text>
        <dbReference type="Rhea" id="RHEA:38575"/>
        <dbReference type="ChEBI" id="CHEBI:15377"/>
        <dbReference type="ChEBI" id="CHEBI:15378"/>
        <dbReference type="ChEBI" id="CHEBI:30823"/>
        <dbReference type="ChEBI" id="CHEBI:53753"/>
        <dbReference type="ChEBI" id="CHEBI:75945"/>
    </reaction>
    <physiologicalReaction direction="left-to-right" evidence="7">
        <dbReference type="Rhea" id="RHEA:38576"/>
    </physiologicalReaction>
</comment>
<comment type="catalytic activity">
    <reaction evidence="1">
        <text>1,2,3-tributanoylglycerol + H2O = dibutanoylglycerol + butanoate + H(+)</text>
        <dbReference type="Rhea" id="RHEA:40475"/>
        <dbReference type="ChEBI" id="CHEBI:15377"/>
        <dbReference type="ChEBI" id="CHEBI:15378"/>
        <dbReference type="ChEBI" id="CHEBI:17968"/>
        <dbReference type="ChEBI" id="CHEBI:35020"/>
        <dbReference type="ChEBI" id="CHEBI:76478"/>
    </reaction>
    <physiologicalReaction direction="left-to-right" evidence="7">
        <dbReference type="Rhea" id="RHEA:40476"/>
    </physiologicalReaction>
</comment>
<comment type="catalytic activity">
    <reaction evidence="1 2">
        <text>1,2,3-trioctanoylglycerol + H2O = dioctanoylglycerol + octanoate + H(+)</text>
        <dbReference type="Rhea" id="RHEA:47864"/>
        <dbReference type="ChEBI" id="CHEBI:15377"/>
        <dbReference type="ChEBI" id="CHEBI:15378"/>
        <dbReference type="ChEBI" id="CHEBI:25646"/>
        <dbReference type="ChEBI" id="CHEBI:76978"/>
        <dbReference type="ChEBI" id="CHEBI:88066"/>
    </reaction>
    <physiologicalReaction direction="left-to-right" evidence="7 8">
        <dbReference type="Rhea" id="RHEA:47865"/>
    </physiologicalReaction>
</comment>
<comment type="catalytic activity">
    <reaction evidence="1">
        <text>di-(9Z)-octadecenoylglycerol + H2O = (9Z-octadecenoyl)-glycerol + (9Z)-octadecenoate + H(+)</text>
        <dbReference type="Rhea" id="RHEA:47868"/>
        <dbReference type="ChEBI" id="CHEBI:15377"/>
        <dbReference type="ChEBI" id="CHEBI:15378"/>
        <dbReference type="ChEBI" id="CHEBI:30823"/>
        <dbReference type="ChEBI" id="CHEBI:75937"/>
        <dbReference type="ChEBI" id="CHEBI:75945"/>
    </reaction>
    <physiologicalReaction direction="left-to-right" evidence="7">
        <dbReference type="Rhea" id="RHEA:47869"/>
    </physiologicalReaction>
</comment>
<comment type="catalytic activity">
    <reaction evidence="1 2">
        <text>dioctanoylglycerol + H2O = octanoylglycerol + octanoate + H(+)</text>
        <dbReference type="Rhea" id="RHEA:47880"/>
        <dbReference type="ChEBI" id="CHEBI:15377"/>
        <dbReference type="ChEBI" id="CHEBI:15378"/>
        <dbReference type="ChEBI" id="CHEBI:25646"/>
        <dbReference type="ChEBI" id="CHEBI:88066"/>
        <dbReference type="ChEBI" id="CHEBI:88070"/>
    </reaction>
    <physiologicalReaction direction="left-to-right" evidence="7 8">
        <dbReference type="Rhea" id="RHEA:47881"/>
    </physiologicalReaction>
</comment>
<comment type="biophysicochemical properties">
    <phDependence>
        <text evidence="4">Optimum pH is 8.0.</text>
    </phDependence>
</comment>
<comment type="subunit">
    <text evidence="3">Interacts with MIA40; forms mixed disulfide intermediates with MIA40.</text>
</comment>
<comment type="subcellular location">
    <subcellularLocation>
        <location evidence="1">Mitochondrion</location>
    </subcellularLocation>
    <subcellularLocation>
        <location evidence="3">Mitochondrion intermembrane space</location>
    </subcellularLocation>
    <text evidence="3">Imported into the IMS via the MIA40 disulfide relay system.</text>
</comment>
<organism>
    <name type="scientific">Saccharomyces cerevisiae (strain ATCC 204508 / S288c)</name>
    <name type="common">Baker's yeast</name>
    <dbReference type="NCBI Taxonomy" id="559292"/>
    <lineage>
        <taxon>Eukaryota</taxon>
        <taxon>Fungi</taxon>
        <taxon>Dikarya</taxon>
        <taxon>Ascomycota</taxon>
        <taxon>Saccharomycotina</taxon>
        <taxon>Saccharomycetes</taxon>
        <taxon>Saccharomycetales</taxon>
        <taxon>Saccharomycetaceae</taxon>
        <taxon>Saccharomyces</taxon>
    </lineage>
</organism>
<sequence>MKNDNKANDIIIDSVKVPDSYKPPKNPIVFCHGLSGFDKLILIPSVFHLTNLISNSIVHNMAENFMQDDEDKSDNKYTNLLEIEYWIGVKKFLQSKGCTVITTKVPGFGSIEERAMALDAQLQKEVKKIESKDKRHSLNLIAHSMGGLDCRYLICNIKNRNYDILSLTTISTPHRGSEMADYVVDLFENLNALRVSQKILPICFYQLTTAYMKYFNLVTPNSPKVSYFSYGCSFVPKWYNVFCTPWKIVYERSKGCPNDGLVTINSSKWGEYRGTLKDMDHLDVINWKNKLQDDWSKFFRTTTVGEKVDILNFYLKITDDLARKGF</sequence>
<evidence type="ECO:0000269" key="1">
    <source>
    </source>
</evidence>
<evidence type="ECO:0000269" key="2">
    <source>
    </source>
</evidence>
<evidence type="ECO:0000269" key="3">
    <source>
    </source>
</evidence>
<evidence type="ECO:0000269" key="4">
    <source>
    </source>
</evidence>
<evidence type="ECO:0000303" key="5">
    <source>
    </source>
</evidence>
<evidence type="ECO:0000305" key="6"/>
<evidence type="ECO:0000305" key="7">
    <source>
    </source>
</evidence>
<evidence type="ECO:0000305" key="8">
    <source>
    </source>
</evidence>
<evidence type="ECO:0000305" key="9">
    <source ref="7"/>
</evidence>
<proteinExistence type="evidence at protein level"/>
<reference key="1">
    <citation type="journal article" date="1998" name="Yeast">
        <title>The Saccharomyces cerevisiae TGL2 gene encodes a protein with lipolytic activity and can complement an Escherichia coli diacylglycerol kinase disruptant.</title>
        <authorList>
            <person name="van Heusden G.P.H."/>
            <person name="Nebohacova M."/>
            <person name="Overbeeke T.L.A."/>
            <person name="Steensma H.Y."/>
        </authorList>
    </citation>
    <scope>NUCLEOTIDE SEQUENCE [GENOMIC DNA]</scope>
    <scope>FUNCTION</scope>
    <scope>CATALYTIC ACTIVITY</scope>
    <scope>BIOPHYSICOCHEMICAL PROPERTIES</scope>
    <source>
        <strain>S288c / SNY243</strain>
    </source>
</reference>
<reference key="2">
    <citation type="journal article" date="1996" name="Yeast">
        <title>Nucleotide sequence analysis of a 32,500 bp region of the right arm of Saccharomyces cerevisiae chromosome IV.</title>
        <authorList>
            <person name="Brandt P."/>
            <person name="Ramlow S."/>
            <person name="Otto B."/>
            <person name="Bloecker H."/>
        </authorList>
    </citation>
    <scope>NUCLEOTIDE SEQUENCE [GENOMIC DNA]</scope>
    <source>
        <strain>ATCC 204508 / S288c</strain>
    </source>
</reference>
<reference key="3">
    <citation type="journal article" date="1997" name="Nature">
        <title>The nucleotide sequence of Saccharomyces cerevisiae chromosome IV.</title>
        <authorList>
            <person name="Jacq C."/>
            <person name="Alt-Moerbe J."/>
            <person name="Andre B."/>
            <person name="Arnold W."/>
            <person name="Bahr A."/>
            <person name="Ballesta J.P.G."/>
            <person name="Bargues M."/>
            <person name="Baron L."/>
            <person name="Becker A."/>
            <person name="Biteau N."/>
            <person name="Bloecker H."/>
            <person name="Blugeon C."/>
            <person name="Boskovic J."/>
            <person name="Brandt P."/>
            <person name="Brueckner M."/>
            <person name="Buitrago M.J."/>
            <person name="Coster F."/>
            <person name="Delaveau T."/>
            <person name="del Rey F."/>
            <person name="Dujon B."/>
            <person name="Eide L.G."/>
            <person name="Garcia-Cantalejo J.M."/>
            <person name="Goffeau A."/>
            <person name="Gomez-Peris A."/>
            <person name="Granotier C."/>
            <person name="Hanemann V."/>
            <person name="Hankeln T."/>
            <person name="Hoheisel J.D."/>
            <person name="Jaeger W."/>
            <person name="Jimenez A."/>
            <person name="Jonniaux J.-L."/>
            <person name="Kraemer C."/>
            <person name="Kuester H."/>
            <person name="Laamanen P."/>
            <person name="Legros Y."/>
            <person name="Louis E.J."/>
            <person name="Moeller-Rieker S."/>
            <person name="Monnet A."/>
            <person name="Moro M."/>
            <person name="Mueller-Auer S."/>
            <person name="Nussbaumer B."/>
            <person name="Paricio N."/>
            <person name="Paulin L."/>
            <person name="Perea J."/>
            <person name="Perez-Alonso M."/>
            <person name="Perez-Ortin J.E."/>
            <person name="Pohl T.M."/>
            <person name="Prydz H."/>
            <person name="Purnelle B."/>
            <person name="Rasmussen S.W."/>
            <person name="Remacha M.A."/>
            <person name="Revuelta J.L."/>
            <person name="Rieger M."/>
            <person name="Salom D."/>
            <person name="Saluz H.P."/>
            <person name="Saiz J.E."/>
            <person name="Saren A.-M."/>
            <person name="Schaefer M."/>
            <person name="Scharfe M."/>
            <person name="Schmidt E.R."/>
            <person name="Schneider C."/>
            <person name="Scholler P."/>
            <person name="Schwarz S."/>
            <person name="Soler-Mira A."/>
            <person name="Urrestarazu L.A."/>
            <person name="Verhasselt P."/>
            <person name="Vissers S."/>
            <person name="Voet M."/>
            <person name="Volckaert G."/>
            <person name="Wagner G."/>
            <person name="Wambutt R."/>
            <person name="Wedler E."/>
            <person name="Wedler H."/>
            <person name="Woelfl S."/>
            <person name="Harris D.E."/>
            <person name="Bowman S."/>
            <person name="Brown D."/>
            <person name="Churcher C.M."/>
            <person name="Connor R."/>
            <person name="Dedman K."/>
            <person name="Gentles S."/>
            <person name="Hamlin N."/>
            <person name="Hunt S."/>
            <person name="Jones L."/>
            <person name="McDonald S."/>
            <person name="Murphy L.D."/>
            <person name="Niblett D."/>
            <person name="Odell C."/>
            <person name="Oliver K."/>
            <person name="Rajandream M.A."/>
            <person name="Richards C."/>
            <person name="Shore L."/>
            <person name="Walsh S.V."/>
            <person name="Barrell B.G."/>
            <person name="Dietrich F.S."/>
            <person name="Mulligan J.T."/>
            <person name="Allen E."/>
            <person name="Araujo R."/>
            <person name="Aviles E."/>
            <person name="Berno A."/>
            <person name="Carpenter J."/>
            <person name="Chen E."/>
            <person name="Cherry J.M."/>
            <person name="Chung E."/>
            <person name="Duncan M."/>
            <person name="Hunicke-Smith S."/>
            <person name="Hyman R.W."/>
            <person name="Komp C."/>
            <person name="Lashkari D."/>
            <person name="Lew H."/>
            <person name="Lin D."/>
            <person name="Mosedale D."/>
            <person name="Nakahara K."/>
            <person name="Namath A."/>
            <person name="Oefner P."/>
            <person name="Oh C."/>
            <person name="Petel F.X."/>
            <person name="Roberts D."/>
            <person name="Schramm S."/>
            <person name="Schroeder M."/>
            <person name="Shogren T."/>
            <person name="Shroff N."/>
            <person name="Winant A."/>
            <person name="Yelton M.A."/>
            <person name="Botstein D."/>
            <person name="Davis R.W."/>
            <person name="Johnston M."/>
            <person name="Andrews S."/>
            <person name="Brinkman R."/>
            <person name="Cooper J."/>
            <person name="Ding H."/>
            <person name="Du Z."/>
            <person name="Favello A."/>
            <person name="Fulton L."/>
            <person name="Gattung S."/>
            <person name="Greco T."/>
            <person name="Hallsworth K."/>
            <person name="Hawkins J."/>
            <person name="Hillier L.W."/>
            <person name="Jier M."/>
            <person name="Johnson D."/>
            <person name="Johnston L."/>
            <person name="Kirsten J."/>
            <person name="Kucaba T."/>
            <person name="Langston Y."/>
            <person name="Latreille P."/>
            <person name="Le T."/>
            <person name="Mardis E."/>
            <person name="Menezes S."/>
            <person name="Miller N."/>
            <person name="Nhan M."/>
            <person name="Pauley A."/>
            <person name="Peluso D."/>
            <person name="Rifkin L."/>
            <person name="Riles L."/>
            <person name="Taich A."/>
            <person name="Trevaskis E."/>
            <person name="Vignati D."/>
            <person name="Wilcox L."/>
            <person name="Wohldman P."/>
            <person name="Vaudin M."/>
            <person name="Wilson R."/>
            <person name="Waterston R."/>
            <person name="Albermann K."/>
            <person name="Hani J."/>
            <person name="Heumann K."/>
            <person name="Kleine K."/>
            <person name="Mewes H.-W."/>
            <person name="Zollner A."/>
            <person name="Zaccaria P."/>
        </authorList>
    </citation>
    <scope>NUCLEOTIDE SEQUENCE [LARGE SCALE GENOMIC DNA]</scope>
    <source>
        <strain>ATCC 204508 / S288c</strain>
    </source>
</reference>
<reference key="4">
    <citation type="journal article" date="2014" name="G3 (Bethesda)">
        <title>The reference genome sequence of Saccharomyces cerevisiae: Then and now.</title>
        <authorList>
            <person name="Engel S.R."/>
            <person name="Dietrich F.S."/>
            <person name="Fisk D.G."/>
            <person name="Binkley G."/>
            <person name="Balakrishnan R."/>
            <person name="Costanzo M.C."/>
            <person name="Dwight S.S."/>
            <person name="Hitz B.C."/>
            <person name="Karra K."/>
            <person name="Nash R.S."/>
            <person name="Weng S."/>
            <person name="Wong E.D."/>
            <person name="Lloyd P."/>
            <person name="Skrzypek M.S."/>
            <person name="Miyasato S.R."/>
            <person name="Simison M."/>
            <person name="Cherry J.M."/>
        </authorList>
    </citation>
    <scope>GENOME REANNOTATION</scope>
    <source>
        <strain>ATCC 204508 / S288c</strain>
    </source>
</reference>
<reference key="5">
    <citation type="journal article" date="2007" name="Genome Res.">
        <title>Approaching a complete repository of sequence-verified protein-encoding clones for Saccharomyces cerevisiae.</title>
        <authorList>
            <person name="Hu Y."/>
            <person name="Rolfs A."/>
            <person name="Bhullar B."/>
            <person name="Murthy T.V.S."/>
            <person name="Zhu C."/>
            <person name="Berger M.F."/>
            <person name="Camargo A.A."/>
            <person name="Kelley F."/>
            <person name="McCarron S."/>
            <person name="Jepson D."/>
            <person name="Richardson A."/>
            <person name="Raphael J."/>
            <person name="Moreira D."/>
            <person name="Taycher E."/>
            <person name="Zuo D."/>
            <person name="Mohr S."/>
            <person name="Kane M.F."/>
            <person name="Williamson J."/>
            <person name="Simpson A.J.G."/>
            <person name="Bulyk M.L."/>
            <person name="Harlow E."/>
            <person name="Marsischky G."/>
            <person name="Kolodner R.D."/>
            <person name="LaBaer J."/>
        </authorList>
    </citation>
    <scope>NUCLEOTIDE SEQUENCE [GENOMIC DNA]</scope>
    <source>
        <strain>ATCC 204508 / S288c</strain>
    </source>
</reference>
<reference key="6">
    <citation type="journal article" date="2010" name="J. Biol. Chem.">
        <title>The TGL2 gene of Saccharomyces cerevisiae encodes an active acylglycerol lipase located in the mitochondria.</title>
        <authorList>
            <person name="Ham H.J."/>
            <person name="Rho H.J."/>
            <person name="Shin S.K."/>
            <person name="Yoon H.J."/>
        </authorList>
    </citation>
    <scope>FUNCTION</scope>
    <scope>CATALYTIC ACTIVITY</scope>
    <scope>SUBCELLULAR LOCATION</scope>
</reference>
<reference key="7">
    <citation type="journal article" date="2011" name="Front. Biol.">
        <title>Triacylglycerol lipases of the yeast.</title>
        <authorList>
            <person name="Grillitsch K."/>
            <person name="Daum G."/>
        </authorList>
    </citation>
    <scope>LIPASE MOTIF</scope>
</reference>
<reference key="8">
    <citation type="journal article" date="2017" name="J. Lipid Res.">
        <title>Label-free measurement of the yeast short chain TAG lipase activity by ESI-MS after one-step esterification.</title>
        <authorList>
            <person name="Ham H.J."/>
            <person name="Seo J."/>
            <person name="Yoon H.J."/>
            <person name="Shin S.K."/>
        </authorList>
    </citation>
    <scope>CATALYTIC ACTIVITY</scope>
</reference>
<reference key="9">
    <citation type="journal article" date="2019" name="Mol. Biol. Cell">
        <title>The mitochondrial intermembrane space-facing proteins Mcp2 and Tgl2 are involved in yeast lipid metabolism.</title>
        <authorList>
            <person name="Odendall F."/>
            <person name="Backes S."/>
            <person name="Tatsuta T."/>
            <person name="Weill U."/>
            <person name="Schuldiner M."/>
            <person name="Langer T."/>
            <person name="Herrmann J.M."/>
            <person name="Rapaport D."/>
            <person name="Dimmer K.S."/>
        </authorList>
    </citation>
    <scope>FUNCTION</scope>
    <scope>SUBCELLULAR LOCATION</scope>
    <scope>INTERACTION WITH MIA40</scope>
</reference>
<accession>P54857</accession>
<accession>D6VS44</accession>
<accession>E9P8S6</accession>
<dbReference type="EC" id="3.1.1.3" evidence="4"/>
<dbReference type="EMBL" id="X98000">
    <property type="protein sequence ID" value="CAA66637.1"/>
    <property type="molecule type" value="Genomic_DNA"/>
</dbReference>
<dbReference type="EMBL" id="X84162">
    <property type="protein sequence ID" value="CAA58974.1"/>
    <property type="molecule type" value="Genomic_DNA"/>
</dbReference>
<dbReference type="EMBL" id="Z49209">
    <property type="protein sequence ID" value="CAA89087.1"/>
    <property type="molecule type" value="Genomic_DNA"/>
</dbReference>
<dbReference type="EMBL" id="Z74354">
    <property type="protein sequence ID" value="CAA98876.1"/>
    <property type="molecule type" value="Genomic_DNA"/>
</dbReference>
<dbReference type="EMBL" id="AY557691">
    <property type="protein sequence ID" value="AAS56017.1"/>
    <property type="molecule type" value="Genomic_DNA"/>
</dbReference>
<dbReference type="EMBL" id="BK006938">
    <property type="protein sequence ID" value="DAA11904.1"/>
    <property type="molecule type" value="Genomic_DNA"/>
</dbReference>
<dbReference type="PIR" id="S54042">
    <property type="entry name" value="S54042"/>
</dbReference>
<dbReference type="RefSeq" id="NP_010343.1">
    <property type="nucleotide sequence ID" value="NM_001180366.1"/>
</dbReference>
<dbReference type="SMR" id="P54857"/>
<dbReference type="BioGRID" id="32111">
    <property type="interactions" value="164"/>
</dbReference>
<dbReference type="FunCoup" id="P54857">
    <property type="interactions" value="78"/>
</dbReference>
<dbReference type="MINT" id="P54857"/>
<dbReference type="STRING" id="4932.YDR058C"/>
<dbReference type="SwissLipids" id="SLP:000001353"/>
<dbReference type="ESTHER" id="yeast-tgl2">
    <property type="family name" value="PGAP1"/>
</dbReference>
<dbReference type="iPTMnet" id="P54857"/>
<dbReference type="PaxDb" id="4932-YDR058C"/>
<dbReference type="PeptideAtlas" id="P54857"/>
<dbReference type="EnsemblFungi" id="YDR058C_mRNA">
    <property type="protein sequence ID" value="YDR058C"/>
    <property type="gene ID" value="YDR058C"/>
</dbReference>
<dbReference type="GeneID" id="851628"/>
<dbReference type="KEGG" id="sce:YDR058C"/>
<dbReference type="AGR" id="SGD:S000002465"/>
<dbReference type="SGD" id="S000002465">
    <property type="gene designation" value="TGL2"/>
</dbReference>
<dbReference type="VEuPathDB" id="FungiDB:YDR058C"/>
<dbReference type="eggNOG" id="ENOG502QQNH">
    <property type="taxonomic scope" value="Eukaryota"/>
</dbReference>
<dbReference type="HOGENOM" id="CLU_015737_0_0_1"/>
<dbReference type="InParanoid" id="P54857"/>
<dbReference type="OMA" id="WGDYKGT"/>
<dbReference type="OrthoDB" id="5592486at2759"/>
<dbReference type="BioCyc" id="YEAST:YDR058C-MONOMER"/>
<dbReference type="BioGRID-ORCS" id="851628">
    <property type="hits" value="0 hits in 10 CRISPR screens"/>
</dbReference>
<dbReference type="PRO" id="PR:P54857"/>
<dbReference type="Proteomes" id="UP000002311">
    <property type="component" value="Chromosome IV"/>
</dbReference>
<dbReference type="RNAct" id="P54857">
    <property type="molecule type" value="protein"/>
</dbReference>
<dbReference type="GO" id="GO:0005743">
    <property type="term" value="C:mitochondrial inner membrane"/>
    <property type="evidence" value="ECO:0000314"/>
    <property type="project" value="SGD"/>
</dbReference>
<dbReference type="GO" id="GO:0005758">
    <property type="term" value="C:mitochondrial intermembrane space"/>
    <property type="evidence" value="ECO:0000314"/>
    <property type="project" value="SGD"/>
</dbReference>
<dbReference type="GO" id="GO:0005739">
    <property type="term" value="C:mitochondrion"/>
    <property type="evidence" value="ECO:0000314"/>
    <property type="project" value="SGD"/>
</dbReference>
<dbReference type="GO" id="GO:0004806">
    <property type="term" value="F:triacylglycerol lipase activity"/>
    <property type="evidence" value="ECO:0000314"/>
    <property type="project" value="SGD"/>
</dbReference>
<dbReference type="GO" id="GO:0006629">
    <property type="term" value="P:lipid metabolic process"/>
    <property type="evidence" value="ECO:0000318"/>
    <property type="project" value="GO_Central"/>
</dbReference>
<dbReference type="GO" id="GO:0019433">
    <property type="term" value="P:triglyceride catabolic process"/>
    <property type="evidence" value="ECO:0000315"/>
    <property type="project" value="SGD"/>
</dbReference>
<dbReference type="Gene3D" id="3.40.50.1820">
    <property type="entry name" value="alpha/beta hydrolase"/>
    <property type="match status" value="1"/>
</dbReference>
<dbReference type="InterPro" id="IPR029058">
    <property type="entry name" value="AB_hydrolase_fold"/>
</dbReference>
<dbReference type="PANTHER" id="PTHR11440">
    <property type="entry name" value="LECITHIN-CHOLESTEROL ACYLTRANSFERASE-RELATED"/>
    <property type="match status" value="1"/>
</dbReference>
<dbReference type="Pfam" id="PF02089">
    <property type="entry name" value="Palm_thioest"/>
    <property type="match status" value="1"/>
</dbReference>
<dbReference type="SUPFAM" id="SSF53474">
    <property type="entry name" value="alpha/beta-Hydrolases"/>
    <property type="match status" value="1"/>
</dbReference>
<protein>
    <recommendedName>
        <fullName>Triacylglycerol lipase 2</fullName>
        <ecNumber evidence="4">3.1.1.3</ecNumber>
    </recommendedName>
    <alternativeName>
        <fullName>Lipase 2</fullName>
    </alternativeName>
    <alternativeName>
        <fullName evidence="5">Neutral lipid hydrolase</fullName>
    </alternativeName>
</protein>
<gene>
    <name type="primary">TGL2</name>
    <name type="ordered locus">YDR058C</name>
    <name type="ORF">D4225</name>
    <name type="ORF">YD9609.12C</name>
</gene>
<feature type="chain" id="PRO_0000090380" description="Triacylglycerol lipase 2">
    <location>
        <begin position="1"/>
        <end position="326"/>
    </location>
</feature>
<feature type="short sequence motif" description="(A/G)XSXG lipase motif" evidence="9">
    <location>
        <begin position="142"/>
        <end position="146"/>
    </location>
</feature>
<feature type="sequence conflict" description="In Ref. 5; AAS56017." evidence="6" ref="5">
    <original>K</original>
    <variation>N</variation>
    <location>
        <position position="104"/>
    </location>
</feature>
<feature type="sequence conflict" description="In Ref. 1; CAA66637." evidence="6" ref="1">
    <original>R</original>
    <variation>H</variation>
    <location>
        <position position="300"/>
    </location>
</feature>